<proteinExistence type="evidence at protein level"/>
<evidence type="ECO:0000269" key="1">
    <source>
    </source>
</evidence>
<evidence type="ECO:0000269" key="2">
    <source>
    </source>
</evidence>
<evidence type="ECO:0000269" key="3">
    <source>
    </source>
</evidence>
<evidence type="ECO:0000269" key="4">
    <source>
    </source>
</evidence>
<evidence type="ECO:0000269" key="5">
    <source>
    </source>
</evidence>
<evidence type="ECO:0000269" key="6">
    <source>
    </source>
</evidence>
<evidence type="ECO:0000305" key="7"/>
<sequence length="80" mass="8731">MSEQTVEQKLSAEIVTLKSRILDTQDQAARLMEESKILQGTLAEIARAVGITGDTIKVEEIVEAVKNLTAESADEAKDEE</sequence>
<dbReference type="EMBL" id="X03016">
    <property type="protein sequence ID" value="CAA26801.1"/>
    <property type="molecule type" value="Genomic_DNA"/>
</dbReference>
<dbReference type="EMBL" id="AF158101">
    <property type="protein sequence ID" value="AAD42500.1"/>
    <property type="molecule type" value="Genomic_DNA"/>
</dbReference>
<dbReference type="PIR" id="B92919">
    <property type="entry name" value="ZABPT4"/>
</dbReference>
<dbReference type="RefSeq" id="NP_049751.1">
    <property type="nucleotide sequence ID" value="NC_000866.4"/>
</dbReference>
<dbReference type="SMR" id="P04532"/>
<dbReference type="DNASU" id="1258624"/>
<dbReference type="GeneID" id="1258624"/>
<dbReference type="KEGG" id="vg:1258624"/>
<dbReference type="OrthoDB" id="22588at10239"/>
<dbReference type="Proteomes" id="UP000009087">
    <property type="component" value="Segment"/>
</dbReference>
<dbReference type="GO" id="GO:0098004">
    <property type="term" value="P:virus tail fiber assembly"/>
    <property type="evidence" value="ECO:0000314"/>
    <property type="project" value="UniProtKB"/>
</dbReference>
<dbReference type="InterPro" id="IPR020159">
    <property type="entry name" value="Phage_Gp57"/>
</dbReference>
<dbReference type="Pfam" id="PF17594">
    <property type="entry name" value="GP57"/>
    <property type="match status" value="1"/>
</dbReference>
<reference key="1">
    <citation type="journal article" date="1985" name="J. Mol. Biol.">
        <title>Sequence organization and control of transcription in the bacteriophage T4 tRNA region.</title>
        <authorList>
            <person name="Broida J."/>
            <person name="Abelson J."/>
        </authorList>
    </citation>
    <scope>NUCLEOTIDE SEQUENCE [GENOMIC DNA]</scope>
</reference>
<reference key="2">
    <citation type="journal article" date="1982" name="Nucleic Acids Res.">
        <title>Nucleotide sequence of the bacteriophage T4 gene 57 and a deduced amino acid sequence.</title>
        <authorList>
            <person name="Herrmann R."/>
        </authorList>
    </citation>
    <scope>NUCLEOTIDE SEQUENCE [GENOMIC DNA]</scope>
</reference>
<reference key="3">
    <citation type="journal article" date="2003" name="Microbiol. Mol. Biol. Rev.">
        <title>Bacteriophage T4 genome.</title>
        <authorList>
            <person name="Miller E.S."/>
            <person name="Kutter E."/>
            <person name="Mosig G."/>
            <person name="Arisaka F."/>
            <person name="Kunisawa T."/>
            <person name="Ruger W."/>
        </authorList>
    </citation>
    <scope>NUCLEOTIDE SEQUENCE [LARGE SCALE GENOMIC DNA]</scope>
</reference>
<reference key="4">
    <citation type="journal article" date="1997" name="J. Bacteriol.">
        <title>Isolation and characterization of a molecular chaperone, gp57A, of bacteriophage T4.</title>
        <authorList>
            <person name="Matsui T."/>
            <person name="Griniuviene B."/>
            <person name="Goldberg E."/>
            <person name="Tsugita A."/>
            <person name="Tanaka N."/>
            <person name="Arisaka F."/>
        </authorList>
    </citation>
    <scope>PROTEIN SEQUENCE</scope>
    <scope>FUNCTION</scope>
    <scope>CHARACTERIZATION</scope>
</reference>
<reference key="5">
    <citation type="journal article" date="1996" name="J. Bacteriol.">
        <title>Characterization of the helper proteins for the assembly of tail fibers of coliphages T4 and lambda.</title>
        <authorList>
            <person name="Hashemolhosseini S."/>
            <person name="Stierhof Y.D."/>
            <person name="Hindennach I."/>
            <person name="Henning U."/>
        </authorList>
    </citation>
    <scope>PROTEIN SEQUENCE OF 2-8</scope>
    <scope>CHARACTERIZATION</scope>
    <scope>CRYSTALLIZATION</scope>
    <scope>IDENTIFICATION</scope>
    <scope>FUNCTION</scope>
</reference>
<reference key="6">
    <citation type="journal article" date="1971" name="J. Mol. Biol.">
        <title>Assembly of bacteriophage T4 tail fibers. 3. Genetic control of the major tail fiber polypeptides.</title>
        <authorList>
            <person name="Ward S."/>
            <person name="Dickson R.C."/>
        </authorList>
    </citation>
    <scope>FUNCTION</scope>
</reference>
<reference key="7">
    <citation type="journal article" date="1981" name="Mol. Gen. Genet.">
        <title>Assembly of bacteriophage T4 tail fibers: identification and characterization of the nonstructural protein gp57.</title>
        <authorList>
            <person name="Herrmann R."/>
            <person name="Wood W.B."/>
        </authorList>
    </citation>
    <scope>FUNCTION</scope>
</reference>
<reference key="8">
    <citation type="journal article" date="2003" name="Biophys. J.">
        <title>Reversible and fast association equilibria of a molecular chaperone, gp57A, of bacteriophage T4.</title>
        <authorList>
            <person name="Ali S.A."/>
            <person name="Iwabuchi N."/>
            <person name="Matsui T."/>
            <person name="Hirota K."/>
            <person name="Kidokoro S."/>
            <person name="Arai M."/>
            <person name="Kuwajima K."/>
            <person name="Schuck P."/>
            <person name="Arisaka F."/>
        </authorList>
    </citation>
    <scope>SUBUNIT</scope>
</reference>
<reference key="9">
    <citation type="journal article" date="2010" name="Protein Expr. Purif.">
        <title>Two-chaperone assisted soluble expression and purification of the bacteriophage T4 long tail fibre protein gp37.</title>
        <authorList>
            <person name="Bartual S.G."/>
            <person name="Garcia-Doval C."/>
            <person name="Alonso J."/>
            <person name="Schoehn G."/>
            <person name="van Raaij M.J."/>
        </authorList>
    </citation>
    <scope>FUNCTION</scope>
</reference>
<protein>
    <recommendedName>
        <fullName>Tail fiber assembly helper protein</fullName>
    </recommendedName>
    <alternativeName>
        <fullName>Gene product 57</fullName>
        <shortName>gp57</shortName>
    </alternativeName>
</protein>
<comment type="function">
    <text evidence="2 3 4 5 6">Chaperone essential for folding and oligomerization of both long and short tail fibers. Required for the assembly of gp34, gp36 and gp37 (components of the long tail fiber) and p12 (the subunit of the short tail fiber). Together with gp38, participates in the formation of the distal part of the long fibers.</text>
</comment>
<comment type="subunit">
    <text evidence="1">Homotrimer. Homohexamer.</text>
</comment>
<organismHost>
    <name type="scientific">Escherichia coli</name>
    <dbReference type="NCBI Taxonomy" id="562"/>
</organismHost>
<accession>P04532</accession>
<name>GP57_BPT4</name>
<organism>
    <name type="scientific">Enterobacteria phage T4</name>
    <name type="common">Bacteriophage T4</name>
    <dbReference type="NCBI Taxonomy" id="10665"/>
    <lineage>
        <taxon>Viruses</taxon>
        <taxon>Duplodnaviria</taxon>
        <taxon>Heunggongvirae</taxon>
        <taxon>Uroviricota</taxon>
        <taxon>Caudoviricetes</taxon>
        <taxon>Straboviridae</taxon>
        <taxon>Tevenvirinae</taxon>
        <taxon>Tequatrovirus</taxon>
    </lineage>
</organism>
<gene>
    <name type="primary">57</name>
    <name type="synonym">57A</name>
</gene>
<keyword id="KW-0143">Chaperone</keyword>
<keyword id="KW-0903">Direct protein sequencing</keyword>
<keyword id="KW-1185">Reference proteome</keyword>
<keyword id="KW-1188">Viral release from host cell</keyword>
<keyword id="KW-1245">Viral tail assembly</keyword>
<keyword id="KW-1246">Viral tail fiber assembly</keyword>
<feature type="initiator methionine" description="Removed; by host" evidence="5">
    <location>
        <position position="1"/>
    </location>
</feature>
<feature type="chain" id="PRO_0000164992" description="Tail fiber assembly helper protein">
    <location>
        <begin position="2"/>
        <end position="80"/>
    </location>
</feature>
<feature type="sequence conflict" description="In Ref. 4; AA sequence and 5; AA sequence." evidence="7" ref="4 5">
    <original>V</original>
    <variation>I</variation>
    <location>
        <position position="6"/>
    </location>
</feature>